<proteinExistence type="inferred from homology"/>
<protein>
    <recommendedName>
        <fullName evidence="1">Phosphonates import ATP-binding protein PhnC 2</fullName>
        <ecNumber evidence="1">7.3.2.2</ecNumber>
    </recommendedName>
</protein>
<dbReference type="EC" id="7.3.2.2" evidence="1"/>
<dbReference type="EMBL" id="CP000393">
    <property type="protein sequence ID" value="ABG53908.1"/>
    <property type="molecule type" value="Genomic_DNA"/>
</dbReference>
<dbReference type="RefSeq" id="WP_011614202.1">
    <property type="nucleotide sequence ID" value="NC_008312.1"/>
</dbReference>
<dbReference type="SMR" id="Q10V16"/>
<dbReference type="STRING" id="203124.Tery_4994"/>
<dbReference type="KEGG" id="ter:Tery_4994"/>
<dbReference type="eggNOG" id="COG3638">
    <property type="taxonomic scope" value="Bacteria"/>
</dbReference>
<dbReference type="HOGENOM" id="CLU_000604_1_22_3"/>
<dbReference type="OrthoDB" id="9802264at2"/>
<dbReference type="GO" id="GO:0005886">
    <property type="term" value="C:plasma membrane"/>
    <property type="evidence" value="ECO:0007669"/>
    <property type="project" value="UniProtKB-SubCell"/>
</dbReference>
<dbReference type="GO" id="GO:0015416">
    <property type="term" value="F:ABC-type phosphonate transporter activity"/>
    <property type="evidence" value="ECO:0007669"/>
    <property type="project" value="UniProtKB-EC"/>
</dbReference>
<dbReference type="GO" id="GO:0005524">
    <property type="term" value="F:ATP binding"/>
    <property type="evidence" value="ECO:0007669"/>
    <property type="project" value="UniProtKB-KW"/>
</dbReference>
<dbReference type="GO" id="GO:0016887">
    <property type="term" value="F:ATP hydrolysis activity"/>
    <property type="evidence" value="ECO:0007669"/>
    <property type="project" value="InterPro"/>
</dbReference>
<dbReference type="CDD" id="cd03256">
    <property type="entry name" value="ABC_PhnC_transporter"/>
    <property type="match status" value="1"/>
</dbReference>
<dbReference type="Gene3D" id="3.40.50.300">
    <property type="entry name" value="P-loop containing nucleotide triphosphate hydrolases"/>
    <property type="match status" value="1"/>
</dbReference>
<dbReference type="InterPro" id="IPR003593">
    <property type="entry name" value="AAA+_ATPase"/>
</dbReference>
<dbReference type="InterPro" id="IPR003439">
    <property type="entry name" value="ABC_transporter-like_ATP-bd"/>
</dbReference>
<dbReference type="InterPro" id="IPR017871">
    <property type="entry name" value="ABC_transporter-like_CS"/>
</dbReference>
<dbReference type="InterPro" id="IPR012693">
    <property type="entry name" value="ABC_transpr_PhnC"/>
</dbReference>
<dbReference type="InterPro" id="IPR050086">
    <property type="entry name" value="MetN_ABC_transporter-like"/>
</dbReference>
<dbReference type="InterPro" id="IPR027417">
    <property type="entry name" value="P-loop_NTPase"/>
</dbReference>
<dbReference type="NCBIfam" id="TIGR02315">
    <property type="entry name" value="ABC_phnC"/>
    <property type="match status" value="1"/>
</dbReference>
<dbReference type="PANTHER" id="PTHR43166">
    <property type="entry name" value="AMINO ACID IMPORT ATP-BINDING PROTEIN"/>
    <property type="match status" value="1"/>
</dbReference>
<dbReference type="PANTHER" id="PTHR43166:SF6">
    <property type="entry name" value="PHOSPHONATES IMPORT ATP-BINDING PROTEIN PHNC"/>
    <property type="match status" value="1"/>
</dbReference>
<dbReference type="Pfam" id="PF00005">
    <property type="entry name" value="ABC_tran"/>
    <property type="match status" value="1"/>
</dbReference>
<dbReference type="SMART" id="SM00382">
    <property type="entry name" value="AAA"/>
    <property type="match status" value="1"/>
</dbReference>
<dbReference type="SUPFAM" id="SSF52540">
    <property type="entry name" value="P-loop containing nucleoside triphosphate hydrolases"/>
    <property type="match status" value="1"/>
</dbReference>
<dbReference type="PROSITE" id="PS00211">
    <property type="entry name" value="ABC_TRANSPORTER_1"/>
    <property type="match status" value="1"/>
</dbReference>
<dbReference type="PROSITE" id="PS50893">
    <property type="entry name" value="ABC_TRANSPORTER_2"/>
    <property type="match status" value="1"/>
</dbReference>
<dbReference type="PROSITE" id="PS51249">
    <property type="entry name" value="PHNC"/>
    <property type="match status" value="1"/>
</dbReference>
<feature type="chain" id="PRO_0000274768" description="Phosphonates import ATP-binding protein PhnC 2">
    <location>
        <begin position="1"/>
        <end position="260"/>
    </location>
</feature>
<feature type="domain" description="ABC transporter" evidence="1">
    <location>
        <begin position="4"/>
        <end position="245"/>
    </location>
</feature>
<feature type="binding site" evidence="1">
    <location>
        <begin position="37"/>
        <end position="44"/>
    </location>
    <ligand>
        <name>ATP</name>
        <dbReference type="ChEBI" id="CHEBI:30616"/>
    </ligand>
</feature>
<evidence type="ECO:0000255" key="1">
    <source>
        <dbReference type="HAMAP-Rule" id="MF_01713"/>
    </source>
</evidence>
<sequence>MYVIQINKATKTYNNGTIAVHPTSLNFEPGTFNAILGPSGAGKSTLLRMINGLEIPTTGEIIIQGQTLTAKNLRQVRSRTAMVFQQFNLVGRLNVMTNILTGRLYYIPWWSSILYMFGQRDWKIAQWALNRVSLKEKAWERVDRLSGGQQQRVGVARALAQRPEVILADEPVASLDPIASEEIMELLREICRQDGITIVANLHQVSLALRYADRVIGLNKGRVVFDDSPQALSNNKNTLRTIYQREDGSVDDTLEMAVTD</sequence>
<gene>
    <name evidence="1" type="primary">phnC2</name>
    <name type="ordered locus">Tery_4994</name>
</gene>
<name>PHNC2_TRIEI</name>
<accession>Q10V16</accession>
<comment type="function">
    <text evidence="1">Part of the ABC transporter complex PhnCDE involved in phosphonates import. Responsible for energy coupling to the transport system.</text>
</comment>
<comment type="catalytic activity">
    <reaction evidence="1">
        <text>phosphonate(out) + ATP + H2O = phosphonate(in) + ADP + phosphate + H(+)</text>
        <dbReference type="Rhea" id="RHEA:18065"/>
        <dbReference type="ChEBI" id="CHEBI:15377"/>
        <dbReference type="ChEBI" id="CHEBI:15378"/>
        <dbReference type="ChEBI" id="CHEBI:16215"/>
        <dbReference type="ChEBI" id="CHEBI:30616"/>
        <dbReference type="ChEBI" id="CHEBI:43474"/>
        <dbReference type="ChEBI" id="CHEBI:456216"/>
        <dbReference type="EC" id="7.3.2.2"/>
    </reaction>
</comment>
<comment type="subunit">
    <text evidence="1">The complex is composed of two ATP-binding proteins (PhnC), two transmembrane proteins (PhnE) and a solute-binding protein (PhnD).</text>
</comment>
<comment type="subcellular location">
    <subcellularLocation>
        <location evidence="1">Cell inner membrane</location>
        <topology evidence="1">Peripheral membrane protein</topology>
    </subcellularLocation>
</comment>
<comment type="similarity">
    <text evidence="1">Belongs to the ABC transporter superfamily. Phosphonates importer (TC 3.A.1.9.1) family.</text>
</comment>
<keyword id="KW-0067">ATP-binding</keyword>
<keyword id="KW-0997">Cell inner membrane</keyword>
<keyword id="KW-1003">Cell membrane</keyword>
<keyword id="KW-0472">Membrane</keyword>
<keyword id="KW-0547">Nucleotide-binding</keyword>
<keyword id="KW-0918">Phosphonate transport</keyword>
<keyword id="KW-1278">Translocase</keyword>
<keyword id="KW-0813">Transport</keyword>
<reference key="1">
    <citation type="journal article" date="2015" name="Proc. Natl. Acad. Sci. U.S.A.">
        <title>Trichodesmium genome maintains abundant, widespread noncoding DNA in situ, despite oligotrophic lifestyle.</title>
        <authorList>
            <person name="Walworth N."/>
            <person name="Pfreundt U."/>
            <person name="Nelson W.C."/>
            <person name="Mincer T."/>
            <person name="Heidelberg J.F."/>
            <person name="Fu F."/>
            <person name="Waterbury J.B."/>
            <person name="Glavina del Rio T."/>
            <person name="Goodwin L."/>
            <person name="Kyrpides N.C."/>
            <person name="Land M.L."/>
            <person name="Woyke T."/>
            <person name="Hutchins D.A."/>
            <person name="Hess W.R."/>
            <person name="Webb E.A."/>
        </authorList>
    </citation>
    <scope>NUCLEOTIDE SEQUENCE [LARGE SCALE GENOMIC DNA]</scope>
    <source>
        <strain>IMS101</strain>
    </source>
</reference>
<organism>
    <name type="scientific">Trichodesmium erythraeum (strain IMS101)</name>
    <dbReference type="NCBI Taxonomy" id="203124"/>
    <lineage>
        <taxon>Bacteria</taxon>
        <taxon>Bacillati</taxon>
        <taxon>Cyanobacteriota</taxon>
        <taxon>Cyanophyceae</taxon>
        <taxon>Oscillatoriophycideae</taxon>
        <taxon>Oscillatoriales</taxon>
        <taxon>Microcoleaceae</taxon>
        <taxon>Trichodesmium</taxon>
    </lineage>
</organism>